<evidence type="ECO:0000255" key="1">
    <source>
        <dbReference type="HAMAP-Rule" id="MF_00033"/>
    </source>
</evidence>
<comment type="function">
    <text evidence="1">Cell wall formation. Catalyzes the transfer of a GlcNAc subunit on undecaprenyl-pyrophosphoryl-MurNAc-pentapeptide (lipid intermediate I) to form undecaprenyl-pyrophosphoryl-MurNAc-(pentapeptide)GlcNAc (lipid intermediate II).</text>
</comment>
<comment type="catalytic activity">
    <reaction evidence="1">
        <text>di-trans,octa-cis-undecaprenyl diphospho-N-acetyl-alpha-D-muramoyl-L-alanyl-D-glutamyl-meso-2,6-diaminopimeloyl-D-alanyl-D-alanine + UDP-N-acetyl-alpha-D-glucosamine = di-trans,octa-cis-undecaprenyl diphospho-[N-acetyl-alpha-D-glucosaminyl-(1-&gt;4)]-N-acetyl-alpha-D-muramoyl-L-alanyl-D-glutamyl-meso-2,6-diaminopimeloyl-D-alanyl-D-alanine + UDP + H(+)</text>
        <dbReference type="Rhea" id="RHEA:31227"/>
        <dbReference type="ChEBI" id="CHEBI:15378"/>
        <dbReference type="ChEBI" id="CHEBI:57705"/>
        <dbReference type="ChEBI" id="CHEBI:58223"/>
        <dbReference type="ChEBI" id="CHEBI:61387"/>
        <dbReference type="ChEBI" id="CHEBI:61388"/>
        <dbReference type="EC" id="2.4.1.227"/>
    </reaction>
</comment>
<comment type="pathway">
    <text evidence="1">Cell wall biogenesis; peptidoglycan biosynthesis.</text>
</comment>
<comment type="subcellular location">
    <subcellularLocation>
        <location evidence="1">Cell inner membrane</location>
        <topology evidence="1">Peripheral membrane protein</topology>
        <orientation evidence="1">Cytoplasmic side</orientation>
    </subcellularLocation>
</comment>
<comment type="similarity">
    <text evidence="1">Belongs to the glycosyltransferase 28 family. MurG subfamily.</text>
</comment>
<keyword id="KW-0131">Cell cycle</keyword>
<keyword id="KW-0132">Cell division</keyword>
<keyword id="KW-0997">Cell inner membrane</keyword>
<keyword id="KW-1003">Cell membrane</keyword>
<keyword id="KW-0133">Cell shape</keyword>
<keyword id="KW-0961">Cell wall biogenesis/degradation</keyword>
<keyword id="KW-0328">Glycosyltransferase</keyword>
<keyword id="KW-0472">Membrane</keyword>
<keyword id="KW-0573">Peptidoglycan synthesis</keyword>
<keyword id="KW-0808">Transferase</keyword>
<protein>
    <recommendedName>
        <fullName evidence="1">UDP-N-acetylglucosamine--N-acetylmuramyl-(pentapeptide) pyrophosphoryl-undecaprenol N-acetylglucosamine transferase</fullName>
        <ecNumber evidence="1">2.4.1.227</ecNumber>
    </recommendedName>
    <alternativeName>
        <fullName evidence="1">Undecaprenyl-PP-MurNAc-pentapeptide-UDPGlcNAc GlcNAc transferase</fullName>
    </alternativeName>
</protein>
<dbReference type="EC" id="2.4.1.227" evidence="1"/>
<dbReference type="EMBL" id="CP000911">
    <property type="protein sequence ID" value="ABY38521.1"/>
    <property type="molecule type" value="Genomic_DNA"/>
</dbReference>
<dbReference type="RefSeq" id="WP_004689823.1">
    <property type="nucleotide sequence ID" value="NC_010169.1"/>
</dbReference>
<dbReference type="SMR" id="B0CHM0"/>
<dbReference type="CAZy" id="GT28">
    <property type="family name" value="Glycosyltransferase Family 28"/>
</dbReference>
<dbReference type="GeneID" id="97533363"/>
<dbReference type="KEGG" id="bmt:BSUIS_A1483"/>
<dbReference type="HOGENOM" id="CLU_037404_2_1_5"/>
<dbReference type="UniPathway" id="UPA00219"/>
<dbReference type="Proteomes" id="UP000008545">
    <property type="component" value="Chromosome I"/>
</dbReference>
<dbReference type="GO" id="GO:0005886">
    <property type="term" value="C:plasma membrane"/>
    <property type="evidence" value="ECO:0007669"/>
    <property type="project" value="UniProtKB-SubCell"/>
</dbReference>
<dbReference type="GO" id="GO:0051991">
    <property type="term" value="F:UDP-N-acetyl-D-glucosamine:N-acetylmuramoyl-L-alanyl-D-glutamyl-meso-2,6-diaminopimelyl-D-alanyl-D-alanine-diphosphoundecaprenol 4-beta-N-acetylglucosaminlytransferase activity"/>
    <property type="evidence" value="ECO:0007669"/>
    <property type="project" value="RHEA"/>
</dbReference>
<dbReference type="GO" id="GO:0050511">
    <property type="term" value="F:undecaprenyldiphospho-muramoylpentapeptide beta-N-acetylglucosaminyltransferase activity"/>
    <property type="evidence" value="ECO:0007669"/>
    <property type="project" value="UniProtKB-UniRule"/>
</dbReference>
<dbReference type="GO" id="GO:0005975">
    <property type="term" value="P:carbohydrate metabolic process"/>
    <property type="evidence" value="ECO:0007669"/>
    <property type="project" value="InterPro"/>
</dbReference>
<dbReference type="GO" id="GO:0051301">
    <property type="term" value="P:cell division"/>
    <property type="evidence" value="ECO:0007669"/>
    <property type="project" value="UniProtKB-KW"/>
</dbReference>
<dbReference type="GO" id="GO:0071555">
    <property type="term" value="P:cell wall organization"/>
    <property type="evidence" value="ECO:0007669"/>
    <property type="project" value="UniProtKB-KW"/>
</dbReference>
<dbReference type="GO" id="GO:0030259">
    <property type="term" value="P:lipid glycosylation"/>
    <property type="evidence" value="ECO:0007669"/>
    <property type="project" value="UniProtKB-UniRule"/>
</dbReference>
<dbReference type="GO" id="GO:0009252">
    <property type="term" value="P:peptidoglycan biosynthetic process"/>
    <property type="evidence" value="ECO:0007669"/>
    <property type="project" value="UniProtKB-UniRule"/>
</dbReference>
<dbReference type="GO" id="GO:0008360">
    <property type="term" value="P:regulation of cell shape"/>
    <property type="evidence" value="ECO:0007669"/>
    <property type="project" value="UniProtKB-KW"/>
</dbReference>
<dbReference type="CDD" id="cd03785">
    <property type="entry name" value="GT28_MurG"/>
    <property type="match status" value="1"/>
</dbReference>
<dbReference type="Gene3D" id="3.40.50.2000">
    <property type="entry name" value="Glycogen Phosphorylase B"/>
    <property type="match status" value="2"/>
</dbReference>
<dbReference type="HAMAP" id="MF_00033">
    <property type="entry name" value="MurG"/>
    <property type="match status" value="1"/>
</dbReference>
<dbReference type="InterPro" id="IPR006009">
    <property type="entry name" value="GlcNAc_MurG"/>
</dbReference>
<dbReference type="InterPro" id="IPR007235">
    <property type="entry name" value="Glyco_trans_28_C"/>
</dbReference>
<dbReference type="InterPro" id="IPR004276">
    <property type="entry name" value="GlycoTrans_28_N"/>
</dbReference>
<dbReference type="NCBIfam" id="TIGR01133">
    <property type="entry name" value="murG"/>
    <property type="match status" value="1"/>
</dbReference>
<dbReference type="PANTHER" id="PTHR21015:SF22">
    <property type="entry name" value="GLYCOSYLTRANSFERASE"/>
    <property type="match status" value="1"/>
</dbReference>
<dbReference type="PANTHER" id="PTHR21015">
    <property type="entry name" value="UDP-N-ACETYLGLUCOSAMINE--N-ACETYLMURAMYL-(PENTAPEPTIDE) PYROPHOSPHORYL-UNDECAPRENOL N-ACETYLGLUCOSAMINE TRANSFERASE 1"/>
    <property type="match status" value="1"/>
</dbReference>
<dbReference type="Pfam" id="PF04101">
    <property type="entry name" value="Glyco_tran_28_C"/>
    <property type="match status" value="1"/>
</dbReference>
<dbReference type="Pfam" id="PF03033">
    <property type="entry name" value="Glyco_transf_28"/>
    <property type="match status" value="1"/>
</dbReference>
<dbReference type="SUPFAM" id="SSF53756">
    <property type="entry name" value="UDP-Glycosyltransferase/glycogen phosphorylase"/>
    <property type="match status" value="1"/>
</dbReference>
<sequence>MDNLANQGVIVLAAGGTGGHLFPAEALAHELRARGWDVHLATDARAQRFVGAFAQDHVHVIRSATIAGRNPVALLKTFWSLWQGNLDSRKLFRRLKPKLVVGFGGYPTLPPLYAASNMGIPTLIHEQNAVMGRANKGLAGRVKAIAGGFLPENSGAYAAKTVITGNPVRPPVLVAAATPYTPAGKDDRFRLLVFGGSQGAQFFSQAIPAAVALLPEHERARLLITQQARKEDEASARQAYEKLGVPADVAPFFNDMPARMADAHFVIARSGASTVSEITVIGRPAMLVPFPHALDHDQAANAAALAAAGGAEVVRQADLSPQRLAEMLQSAMNEPERLEQQAKAAKSVGKPDAARLLADLAEAIASGKTVQEFKEGNRP</sequence>
<reference key="1">
    <citation type="submission" date="2007-12" db="EMBL/GenBank/DDBJ databases">
        <title>Brucella suis ATCC 23445 whole genome shotgun sequencing project.</title>
        <authorList>
            <person name="Setubal J.C."/>
            <person name="Bowns C."/>
            <person name="Boyle S."/>
            <person name="Crasta O.R."/>
            <person name="Czar M.J."/>
            <person name="Dharmanolla C."/>
            <person name="Gillespie J.J."/>
            <person name="Kenyon R.W."/>
            <person name="Lu J."/>
            <person name="Mane S."/>
            <person name="Mohapatra S."/>
            <person name="Nagrani S."/>
            <person name="Purkayastha A."/>
            <person name="Rajasimha H.K."/>
            <person name="Shallom J.M."/>
            <person name="Shallom S."/>
            <person name="Shukla M."/>
            <person name="Snyder E.E."/>
            <person name="Sobral B.W."/>
            <person name="Wattam A.R."/>
            <person name="Will R."/>
            <person name="Williams K."/>
            <person name="Yoo H."/>
            <person name="Bruce D."/>
            <person name="Detter C."/>
            <person name="Munk C."/>
            <person name="Brettin T.S."/>
        </authorList>
    </citation>
    <scope>NUCLEOTIDE SEQUENCE [LARGE SCALE GENOMIC DNA]</scope>
    <source>
        <strain>ATCC 23445 / NCTC 10510</strain>
    </source>
</reference>
<name>MURG_BRUSI</name>
<feature type="chain" id="PRO_1000074449" description="UDP-N-acetylglucosamine--N-acetylmuramyl-(pentapeptide) pyrophosphoryl-undecaprenol N-acetylglucosamine transferase">
    <location>
        <begin position="1"/>
        <end position="379"/>
    </location>
</feature>
<feature type="binding site" evidence="1">
    <location>
        <begin position="17"/>
        <end position="19"/>
    </location>
    <ligand>
        <name>UDP-N-acetyl-alpha-D-glucosamine</name>
        <dbReference type="ChEBI" id="CHEBI:57705"/>
    </ligand>
</feature>
<feature type="binding site" evidence="1">
    <location>
        <position position="128"/>
    </location>
    <ligand>
        <name>UDP-N-acetyl-alpha-D-glucosamine</name>
        <dbReference type="ChEBI" id="CHEBI:57705"/>
    </ligand>
</feature>
<feature type="binding site" evidence="1">
    <location>
        <position position="169"/>
    </location>
    <ligand>
        <name>UDP-N-acetyl-alpha-D-glucosamine</name>
        <dbReference type="ChEBI" id="CHEBI:57705"/>
    </ligand>
</feature>
<feature type="binding site" evidence="1">
    <location>
        <position position="197"/>
    </location>
    <ligand>
        <name>UDP-N-acetyl-alpha-D-glucosamine</name>
        <dbReference type="ChEBI" id="CHEBI:57705"/>
    </ligand>
</feature>
<feature type="binding site" evidence="1">
    <location>
        <position position="298"/>
    </location>
    <ligand>
        <name>UDP-N-acetyl-alpha-D-glucosamine</name>
        <dbReference type="ChEBI" id="CHEBI:57705"/>
    </ligand>
</feature>
<accession>B0CHM0</accession>
<organism>
    <name type="scientific">Brucella suis (strain ATCC 23445 / NCTC 10510)</name>
    <dbReference type="NCBI Taxonomy" id="470137"/>
    <lineage>
        <taxon>Bacteria</taxon>
        <taxon>Pseudomonadati</taxon>
        <taxon>Pseudomonadota</taxon>
        <taxon>Alphaproteobacteria</taxon>
        <taxon>Hyphomicrobiales</taxon>
        <taxon>Brucellaceae</taxon>
        <taxon>Brucella/Ochrobactrum group</taxon>
        <taxon>Brucella</taxon>
    </lineage>
</organism>
<gene>
    <name evidence="1" type="primary">murG</name>
    <name type="ordered locus">BSUIS_A1483</name>
</gene>
<proteinExistence type="inferred from homology"/>